<sequence>MKKIAVDAMGGDYAPQAIVEGVNQALSDFSDIEVQLYGDEAKIKPYLTATERVSIIHTDEKIDSDDEPTRAIRNKKNASMVLAAKAVKDGEADAVLSAGNTGALLAAGFFIVGRIKNIDRPGLMSTLPTVDGKGFDMLDLGANAENTAQHLHQYAVLGSFYAKNVRGIAQPRVGLLNNGTESSKGDPLRKETYELLAADESLNFIGNVEGRDLMNGVADVVVADGFTGNAVLKSIEGTAMGIMGLLKTAITGGGLRAKLGALLLKDSLSGLKKQLNYSDVGGAVLFGVKAPVVKTHGSSDAKAVYSTIRQIRTMLETDVVAQTAREFSGE</sequence>
<comment type="function">
    <text evidence="1">Catalyzes the reversible formation of acyl-phosphate (acyl-PO(4)) from acyl-[acyl-carrier-protein] (acyl-ACP). This enzyme utilizes acyl-ACP as fatty acyl donor, but not acyl-CoA.</text>
</comment>
<comment type="catalytic activity">
    <reaction evidence="1">
        <text>a fatty acyl-[ACP] + phosphate = an acyl phosphate + holo-[ACP]</text>
        <dbReference type="Rhea" id="RHEA:42292"/>
        <dbReference type="Rhea" id="RHEA-COMP:9685"/>
        <dbReference type="Rhea" id="RHEA-COMP:14125"/>
        <dbReference type="ChEBI" id="CHEBI:43474"/>
        <dbReference type="ChEBI" id="CHEBI:59918"/>
        <dbReference type="ChEBI" id="CHEBI:64479"/>
        <dbReference type="ChEBI" id="CHEBI:138651"/>
        <dbReference type="EC" id="2.3.1.274"/>
    </reaction>
</comment>
<comment type="pathway">
    <text evidence="1">Lipid metabolism; phospholipid metabolism.</text>
</comment>
<comment type="subunit">
    <text evidence="1">Homodimer. Probably interacts with PlsY.</text>
</comment>
<comment type="subcellular location">
    <subcellularLocation>
        <location evidence="1">Cytoplasm</location>
    </subcellularLocation>
    <text evidence="1">Associated with the membrane possibly through PlsY.</text>
</comment>
<comment type="similarity">
    <text evidence="1">Belongs to the PlsX family.</text>
</comment>
<reference key="1">
    <citation type="journal article" date="2009" name="J. Bacteriol.">
        <title>Role of conjugative elements in the evolution of the multidrug-resistant pandemic clone Streptococcus pneumoniae Spain23F ST81.</title>
        <authorList>
            <person name="Croucher N.J."/>
            <person name="Walker D."/>
            <person name="Romero P."/>
            <person name="Lennard N."/>
            <person name="Paterson G.K."/>
            <person name="Bason N.C."/>
            <person name="Mitchell A.M."/>
            <person name="Quail M.A."/>
            <person name="Andrew P.W."/>
            <person name="Parkhill J."/>
            <person name="Bentley S.D."/>
            <person name="Mitchell T.J."/>
        </authorList>
    </citation>
    <scope>NUCLEOTIDE SEQUENCE [LARGE SCALE GENOMIC DNA]</scope>
    <source>
        <strain>ATCC 700669 / Spain 23F-1</strain>
    </source>
</reference>
<proteinExistence type="inferred from homology"/>
<accession>B8ZJM1</accession>
<name>PLSX_STRPJ</name>
<feature type="chain" id="PRO_1000193148" description="Phosphate acyltransferase">
    <location>
        <begin position="1"/>
        <end position="330"/>
    </location>
</feature>
<organism>
    <name type="scientific">Streptococcus pneumoniae (strain ATCC 700669 / Spain 23F-1)</name>
    <dbReference type="NCBI Taxonomy" id="561276"/>
    <lineage>
        <taxon>Bacteria</taxon>
        <taxon>Bacillati</taxon>
        <taxon>Bacillota</taxon>
        <taxon>Bacilli</taxon>
        <taxon>Lactobacillales</taxon>
        <taxon>Streptococcaceae</taxon>
        <taxon>Streptococcus</taxon>
    </lineage>
</organism>
<dbReference type="EC" id="2.3.1.274" evidence="1"/>
<dbReference type="EMBL" id="FM211187">
    <property type="protein sequence ID" value="CAR67914.1"/>
    <property type="molecule type" value="Genomic_DNA"/>
</dbReference>
<dbReference type="RefSeq" id="WP_000717451.1">
    <property type="nucleotide sequence ID" value="NC_011900.1"/>
</dbReference>
<dbReference type="SMR" id="B8ZJM1"/>
<dbReference type="KEGG" id="sne:SPN23F00550"/>
<dbReference type="HOGENOM" id="CLU_039379_1_1_9"/>
<dbReference type="UniPathway" id="UPA00085"/>
<dbReference type="GO" id="GO:0005737">
    <property type="term" value="C:cytoplasm"/>
    <property type="evidence" value="ECO:0007669"/>
    <property type="project" value="UniProtKB-SubCell"/>
</dbReference>
<dbReference type="GO" id="GO:0043811">
    <property type="term" value="F:phosphate:acyl-[acyl carrier protein] acyltransferase activity"/>
    <property type="evidence" value="ECO:0007669"/>
    <property type="project" value="UniProtKB-UniRule"/>
</dbReference>
<dbReference type="GO" id="GO:0006633">
    <property type="term" value="P:fatty acid biosynthetic process"/>
    <property type="evidence" value="ECO:0007669"/>
    <property type="project" value="UniProtKB-UniRule"/>
</dbReference>
<dbReference type="GO" id="GO:0008654">
    <property type="term" value="P:phospholipid biosynthetic process"/>
    <property type="evidence" value="ECO:0007669"/>
    <property type="project" value="UniProtKB-KW"/>
</dbReference>
<dbReference type="Gene3D" id="3.40.718.10">
    <property type="entry name" value="Isopropylmalate Dehydrogenase"/>
    <property type="match status" value="1"/>
</dbReference>
<dbReference type="HAMAP" id="MF_00019">
    <property type="entry name" value="PlsX"/>
    <property type="match status" value="1"/>
</dbReference>
<dbReference type="InterPro" id="IPR003664">
    <property type="entry name" value="FA_synthesis"/>
</dbReference>
<dbReference type="InterPro" id="IPR012281">
    <property type="entry name" value="Phospholipid_synth_PlsX-like"/>
</dbReference>
<dbReference type="NCBIfam" id="TIGR00182">
    <property type="entry name" value="plsX"/>
    <property type="match status" value="1"/>
</dbReference>
<dbReference type="PANTHER" id="PTHR30100">
    <property type="entry name" value="FATTY ACID/PHOSPHOLIPID SYNTHESIS PROTEIN PLSX"/>
    <property type="match status" value="1"/>
</dbReference>
<dbReference type="PANTHER" id="PTHR30100:SF1">
    <property type="entry name" value="PHOSPHATE ACYLTRANSFERASE"/>
    <property type="match status" value="1"/>
</dbReference>
<dbReference type="Pfam" id="PF02504">
    <property type="entry name" value="FA_synthesis"/>
    <property type="match status" value="1"/>
</dbReference>
<dbReference type="PIRSF" id="PIRSF002465">
    <property type="entry name" value="Phsphlp_syn_PlsX"/>
    <property type="match status" value="1"/>
</dbReference>
<dbReference type="SUPFAM" id="SSF53659">
    <property type="entry name" value="Isocitrate/Isopropylmalate dehydrogenase-like"/>
    <property type="match status" value="1"/>
</dbReference>
<keyword id="KW-0963">Cytoplasm</keyword>
<keyword id="KW-0444">Lipid biosynthesis</keyword>
<keyword id="KW-0443">Lipid metabolism</keyword>
<keyword id="KW-0594">Phospholipid biosynthesis</keyword>
<keyword id="KW-1208">Phospholipid metabolism</keyword>
<keyword id="KW-0808">Transferase</keyword>
<evidence type="ECO:0000255" key="1">
    <source>
        <dbReference type="HAMAP-Rule" id="MF_00019"/>
    </source>
</evidence>
<gene>
    <name evidence="1" type="primary">plsX</name>
    <name type="ordered locus">SPN23F00550</name>
</gene>
<protein>
    <recommendedName>
        <fullName evidence="1">Phosphate acyltransferase</fullName>
        <ecNumber evidence="1">2.3.1.274</ecNumber>
    </recommendedName>
    <alternativeName>
        <fullName evidence="1">Acyl-ACP phosphotransacylase</fullName>
    </alternativeName>
    <alternativeName>
        <fullName evidence="1">Acyl-[acyl-carrier-protein]--phosphate acyltransferase</fullName>
    </alternativeName>
    <alternativeName>
        <fullName evidence="1">Phosphate-acyl-ACP acyltransferase</fullName>
    </alternativeName>
</protein>